<reference key="1">
    <citation type="journal article" date="1992" name="J. Biol. Chem.">
        <title>4-oxalocrotonate tautomerase, an enzyme composed of 62 amino acid residues per monomer.</title>
        <authorList>
            <person name="Chen L.H."/>
            <person name="Kenyon G.L."/>
            <person name="Curtin F."/>
            <person name="Harayama S."/>
            <person name="Bembenek M.E."/>
            <person name="Hajipour G."/>
            <person name="Whitman C.P."/>
        </authorList>
    </citation>
    <scope>NUCLEOTIDE SEQUENCE [GENOMIC DNA]</scope>
    <scope>PROTEIN SEQUENCE OF 2-34</scope>
    <scope>FUNCTION</scope>
    <scope>CATALYTIC ACTIVITY</scope>
    <scope>BIOPHYSICOCHEMICAL PROPERTIES</scope>
    <source>
        <strain>ATCC 33015 / DSM 3931 / JCM 6156 / NCIMB 12182 / mt-2</strain>
    </source>
</reference>
<reference key="2">
    <citation type="journal article" date="1993" name="Mol. Gen. Genet.">
        <title>Comparison of the nucleotide sequences of the meta-cleavage pathway genes of TOL plasmid pWW0 from Pseudomonas putida with other meta-cleavage genes suggests that both single and multiple nucleotide substitutions contribute to enzyme evolution.</title>
        <authorList>
            <person name="Harayama S."/>
            <person name="Rekik M."/>
        </authorList>
    </citation>
    <scope>NUCLEOTIDE SEQUENCE [GENOMIC DNA]</scope>
    <source>
        <strain>ATCC 33015 / DSM 3931 / JCM 6156 / NCIMB 12182 / mt-2</strain>
    </source>
</reference>
<reference key="3">
    <citation type="journal article" date="2002" name="Environ. Microbiol.">
        <title>Complete sequence of the IncP-9 TOL plasmid pWW0 from Pseudomonas putida.</title>
        <authorList>
            <person name="Greated A."/>
            <person name="Lambertsen L."/>
            <person name="Williams P.A."/>
            <person name="Thomas C.M."/>
        </authorList>
    </citation>
    <scope>NUCLEOTIDE SEQUENCE [GENOMIC DNA]</scope>
</reference>
<reference key="4">
    <citation type="journal article" date="1996" name="Biochemistry">
        <title>Enzymatic ketonization of 2-hydroxymuconate: specificity and mechanism investigated by the crystal structures of two isomerases.</title>
        <authorList>
            <person name="Subramanya H.S."/>
            <person name="Roper D.I."/>
            <person name="Dauter Z."/>
            <person name="Dodson E.J."/>
            <person name="Davies G.J."/>
            <person name="Wilson K.S."/>
            <person name="Wigley D.B."/>
        </authorList>
    </citation>
    <scope>X-RAY CRYSTALLOGRAPHY (1.9 ANGSTROMS)</scope>
    <scope>SUBUNIT</scope>
    <scope>REACTION MECHANISM</scope>
</reference>
<reference key="5">
    <citation type="journal article" date="1998" name="Biochemistry">
        <title>Crystal structure of 4-oxalocrotonate tautomerase inactivated by 2-oxo-3-pentynoate at 2.4-A resolution: analysis and implications for the mechanism of inactivation and catalysis.</title>
        <authorList>
            <person name="Taylor A.B."/>
            <person name="Czerwinski R.M."/>
            <person name="Johnson W.H. Jr."/>
            <person name="Whitman C.P."/>
            <person name="Hackert M.L."/>
        </authorList>
    </citation>
    <scope>X-RAY CRYSTALLOGRAPHY (2.4 ANGSTROMS)</scope>
    <source>
        <strain>ATCC 33015 / DSM 3931 / JCM 6156 / NCIMB 12182 / mt-2</strain>
    </source>
</reference>
<reference key="6">
    <citation type="journal article" date="1996" name="Biochemistry">
        <title>Catalytic role of the amino-terminal proline in 4-oxalocrotonate tautomerase: affinity labeling and heteronuclear NMR studies.</title>
        <authorList>
            <person name="Stivers J.T."/>
            <person name="Abeygunawardana C."/>
            <person name="Mildvan A.S."/>
            <person name="Hajipour G."/>
            <person name="Whitman C.P."/>
            <person name="Chen L.H."/>
        </authorList>
    </citation>
    <scope>STRUCTURE BY NMR</scope>
    <scope>ACTIVE SITE</scope>
</reference>
<organism>
    <name type="scientific">Pseudomonas putida</name>
    <name type="common">Arthrobacter siderocapsulatus</name>
    <dbReference type="NCBI Taxonomy" id="303"/>
    <lineage>
        <taxon>Bacteria</taxon>
        <taxon>Pseudomonadati</taxon>
        <taxon>Pseudomonadota</taxon>
        <taxon>Gammaproteobacteria</taxon>
        <taxon>Pseudomonadales</taxon>
        <taxon>Pseudomonadaceae</taxon>
        <taxon>Pseudomonas</taxon>
    </lineage>
</organism>
<proteinExistence type="evidence at protein level"/>
<keyword id="KW-0002">3D-structure</keyword>
<keyword id="KW-0058">Aromatic hydrocarbons catabolism</keyword>
<keyword id="KW-0903">Direct protein sequencing</keyword>
<keyword id="KW-0413">Isomerase</keyword>
<keyword id="KW-0614">Plasmid</keyword>
<feature type="initiator methionine" description="Removed" evidence="1">
    <location>
        <position position="1"/>
    </location>
</feature>
<feature type="chain" id="PRO_0000209514" description="2-hydroxymuconate tautomerase">
    <location>
        <begin position="2"/>
        <end position="63"/>
    </location>
</feature>
<feature type="active site" description="Proton acceptor; via imino nitrogen" evidence="3">
    <location>
        <position position="2"/>
    </location>
</feature>
<feature type="strand" evidence="7">
    <location>
        <begin position="3"/>
        <end position="10"/>
    </location>
</feature>
<feature type="helix" evidence="7">
    <location>
        <begin position="14"/>
        <end position="32"/>
    </location>
</feature>
<feature type="helix" evidence="7">
    <location>
        <begin position="36"/>
        <end position="38"/>
    </location>
</feature>
<feature type="strand" evidence="7">
    <location>
        <begin position="40"/>
        <end position="46"/>
    </location>
</feature>
<feature type="helix" evidence="7">
    <location>
        <begin position="48"/>
        <end position="50"/>
    </location>
</feature>
<feature type="strand" evidence="6">
    <location>
        <begin position="51"/>
        <end position="53"/>
    </location>
</feature>
<feature type="helix" evidence="5">
    <location>
        <begin position="58"/>
        <end position="60"/>
    </location>
</feature>
<protein>
    <recommendedName>
        <fullName>2-hydroxymuconate tautomerase</fullName>
        <ecNumber>5.3.2.6</ecNumber>
    </recommendedName>
    <alternativeName>
        <fullName>4-oxalocrotonate tautomerase</fullName>
        <shortName>4-OT</shortName>
    </alternativeName>
</protein>
<geneLocation type="plasmid">
    <name>TOL pWW0</name>
</geneLocation>
<evidence type="ECO:0000269" key="1">
    <source>
    </source>
</evidence>
<evidence type="ECO:0000269" key="2">
    <source>
    </source>
</evidence>
<evidence type="ECO:0000269" key="3">
    <source>
    </source>
</evidence>
<evidence type="ECO:0000305" key="4"/>
<evidence type="ECO:0007829" key="5">
    <source>
        <dbReference type="PDB" id="4OTC"/>
    </source>
</evidence>
<evidence type="ECO:0007829" key="6">
    <source>
        <dbReference type="PDB" id="4X1C"/>
    </source>
</evidence>
<evidence type="ECO:0007829" key="7">
    <source>
        <dbReference type="PDB" id="6BGN"/>
    </source>
</evidence>
<accession>Q01468</accession>
<sequence length="63" mass="6942">MPIAQIHILEGRSDEQKETLIREVSEAISRSLDAPLTSVRVIITEMAKGHFGIGGELASKVRR</sequence>
<comment type="function">
    <text evidence="1">Catalyzes the ketonization of 2-hydroxymuconate stereoselectively to yield 2-oxo-3-hexenedioate.</text>
</comment>
<comment type="catalytic activity">
    <reaction evidence="1">
        <text>(2Z,4E)-2-hydroxyhexa-2,4-dienedioate = (3E)-2-oxohex-3-enedioate</text>
        <dbReference type="Rhea" id="RHEA:33431"/>
        <dbReference type="ChEBI" id="CHEBI:28080"/>
        <dbReference type="ChEBI" id="CHEBI:64908"/>
        <dbReference type="EC" id="5.3.2.6"/>
    </reaction>
</comment>
<comment type="pathway">
    <text>Xenobiotic degradation; toluene degradation.</text>
</comment>
<comment type="pathway">
    <text>Xenobiotic degradation; xylene degradation.</text>
</comment>
<comment type="subunit">
    <text evidence="2">Homohexamer.</text>
</comment>
<comment type="similarity">
    <text evidence="4">Belongs to the 4-oxalocrotonate tautomerase family.</text>
</comment>
<name>4OT1_PSEPU</name>
<dbReference type="EC" id="5.3.2.6"/>
<dbReference type="EMBL" id="M95650">
    <property type="protein sequence ID" value="AAA26046.1"/>
    <property type="molecule type" value="Genomic_DNA"/>
</dbReference>
<dbReference type="EMBL" id="M94186">
    <property type="protein sequence ID" value="AAA25694.1"/>
    <property type="molecule type" value="Genomic_DNA"/>
</dbReference>
<dbReference type="EMBL" id="AJ344068">
    <property type="protein sequence ID" value="CAC86799.1"/>
    <property type="molecule type" value="Genomic_DNA"/>
</dbReference>
<dbReference type="PIR" id="A43397">
    <property type="entry name" value="A43397"/>
</dbReference>
<dbReference type="RefSeq" id="NP_542859.1">
    <property type="nucleotide sequence ID" value="NC_003350.1"/>
</dbReference>
<dbReference type="RefSeq" id="WP_011005902.1">
    <property type="nucleotide sequence ID" value="NZ_LT852425.1"/>
</dbReference>
<dbReference type="PDB" id="1BJP">
    <property type="method" value="X-ray"/>
    <property type="resolution" value="2.40 A"/>
    <property type="chains" value="A/B/C/D/E=2-63"/>
</dbReference>
<dbReference type="PDB" id="2FM7">
    <property type="method" value="X-ray"/>
    <property type="resolution" value="2.80 A"/>
    <property type="chains" value="A/B/C/D/E/F=2-62"/>
</dbReference>
<dbReference type="PDB" id="4OTA">
    <property type="method" value="X-ray"/>
    <property type="resolution" value="2.75 A"/>
    <property type="chains" value="A/B/C/D/E/F/G/H/I/J/K/L/M/N/O/P/Q/R=2-63"/>
</dbReference>
<dbReference type="PDB" id="4OTB">
    <property type="method" value="X-ray"/>
    <property type="resolution" value="2.50 A"/>
    <property type="chains" value="A/B/C/D/E/F/G/H/I/J/K/L=2-63"/>
</dbReference>
<dbReference type="PDB" id="4OTC">
    <property type="method" value="X-ray"/>
    <property type="resolution" value="2.28 A"/>
    <property type="chains" value="A/B/C/D/E/F/G/H/I=2-63"/>
</dbReference>
<dbReference type="PDB" id="4X19">
    <property type="method" value="X-ray"/>
    <property type="resolution" value="1.94 A"/>
    <property type="chains" value="A/B/C/D/E/F/G/H/I/J/K/L/M/N/O/P/Q/R/S/T/U/V/W/X/Y/Z/a/b/c/d=2-63"/>
</dbReference>
<dbReference type="PDB" id="4X1C">
    <property type="method" value="X-ray"/>
    <property type="resolution" value="1.70 A"/>
    <property type="chains" value="A/B/C/D/E/F/G/H/I/J/K/L/M/N/O=2-63"/>
</dbReference>
<dbReference type="PDB" id="5CLN">
    <property type="method" value="X-ray"/>
    <property type="resolution" value="2.71 A"/>
    <property type="chains" value="A/B/C/D/E/F/G/H/I/J/K/L=2-58"/>
</dbReference>
<dbReference type="PDB" id="5CLO">
    <property type="method" value="X-ray"/>
    <property type="resolution" value="2.30 A"/>
    <property type="chains" value="A/B/C/D/E/F/G/H/I/J/K/L/M/N/O/P/Q/R=2-60"/>
</dbReference>
<dbReference type="PDB" id="5TIG">
    <property type="method" value="X-ray"/>
    <property type="resolution" value="2.70 A"/>
    <property type="chains" value="A/B/C/D/E/F/G/H/I/J/K/L/M/N/O/P/Q/R/S/T/U/V/W/X/Y/Z/a/b/c/d=2-63"/>
</dbReference>
<dbReference type="PDB" id="6BGN">
    <property type="method" value="X-ray"/>
    <property type="resolution" value="1.51 A"/>
    <property type="chains" value="A/B/C/D/E/F/G/H/I/J/K/L/M/N/O=2-61"/>
</dbReference>
<dbReference type="PDB" id="6FPS">
    <property type="method" value="X-ray"/>
    <property type="resolution" value="1.90 A"/>
    <property type="chains" value="A/B/C/D/E/F/G/H/I/J/K/L/M/N/O/P/Q/R=2-63"/>
</dbReference>
<dbReference type="PDB" id="6GHW">
    <property type="method" value="X-ray"/>
    <property type="resolution" value="2.30 A"/>
    <property type="chains" value="A/B/C=2-63"/>
</dbReference>
<dbReference type="PDB" id="7PUO">
    <property type="method" value="X-ray"/>
    <property type="resolution" value="2.35 A"/>
    <property type="chains" value="A/B/C/D/E/F=2-63"/>
</dbReference>
<dbReference type="PDBsum" id="1BJP"/>
<dbReference type="PDBsum" id="2FM7"/>
<dbReference type="PDBsum" id="4OTA"/>
<dbReference type="PDBsum" id="4OTB"/>
<dbReference type="PDBsum" id="4OTC"/>
<dbReference type="PDBsum" id="4X19"/>
<dbReference type="PDBsum" id="4X1C"/>
<dbReference type="PDBsum" id="5CLN"/>
<dbReference type="PDBsum" id="5CLO"/>
<dbReference type="PDBsum" id="5TIG"/>
<dbReference type="PDBsum" id="6BGN"/>
<dbReference type="PDBsum" id="6FPS"/>
<dbReference type="PDBsum" id="6GHW"/>
<dbReference type="PDBsum" id="7PUO"/>
<dbReference type="SMR" id="Q01468"/>
<dbReference type="DrugBank" id="DB02005">
    <property type="generic name" value="2-Oxo-3-Pentenoic Acid"/>
</dbReference>
<dbReference type="KEGG" id="ag:AAA26046"/>
<dbReference type="BioCyc" id="MetaCyc:MONOMER-12750"/>
<dbReference type="BRENDA" id="5.3.2.6">
    <property type="organism ID" value="5092"/>
</dbReference>
<dbReference type="SABIO-RK" id="Q01468"/>
<dbReference type="STRENDA-DB" id="XG8UGZ">
    <property type="experiment" value="Pseudomonas putida mt-2m4-oxalocrotonate tautomerase-catalyzed ketonization of dienol substrates"/>
</dbReference>
<dbReference type="UniPathway" id="UPA00228"/>
<dbReference type="UniPathway" id="UPA00273"/>
<dbReference type="EvolutionaryTrace" id="Q01468"/>
<dbReference type="GO" id="GO:0016853">
    <property type="term" value="F:isomerase activity"/>
    <property type="evidence" value="ECO:0007669"/>
    <property type="project" value="UniProtKB-KW"/>
</dbReference>
<dbReference type="GO" id="GO:0042203">
    <property type="term" value="P:toluene catabolic process"/>
    <property type="evidence" value="ECO:0007669"/>
    <property type="project" value="UniProtKB-UniPathway"/>
</dbReference>
<dbReference type="GO" id="GO:0042184">
    <property type="term" value="P:xylene catabolic process"/>
    <property type="evidence" value="ECO:0007669"/>
    <property type="project" value="UniProtKB-UniPathway"/>
</dbReference>
<dbReference type="CDD" id="cd00491">
    <property type="entry name" value="4Oxalocrotonate_Tautomerase"/>
    <property type="match status" value="1"/>
</dbReference>
<dbReference type="Gene3D" id="3.30.429.10">
    <property type="entry name" value="Macrophage Migration Inhibitory Factor"/>
    <property type="match status" value="1"/>
</dbReference>
<dbReference type="InterPro" id="IPR018191">
    <property type="entry name" value="4-OT"/>
</dbReference>
<dbReference type="InterPro" id="IPR004370">
    <property type="entry name" value="4-OT-like_dom"/>
</dbReference>
<dbReference type="InterPro" id="IPR014347">
    <property type="entry name" value="Tautomerase/MIF_sf"/>
</dbReference>
<dbReference type="NCBIfam" id="NF002571">
    <property type="entry name" value="PRK02220.1"/>
    <property type="match status" value="1"/>
</dbReference>
<dbReference type="NCBIfam" id="TIGR00013">
    <property type="entry name" value="taut"/>
    <property type="match status" value="1"/>
</dbReference>
<dbReference type="PANTHER" id="PTHR35530:SF1">
    <property type="entry name" value="2-HYDROXYMUCONATE TAUTOMERASE"/>
    <property type="match status" value="1"/>
</dbReference>
<dbReference type="PANTHER" id="PTHR35530">
    <property type="entry name" value="TAUTOMERASE-RELATED"/>
    <property type="match status" value="1"/>
</dbReference>
<dbReference type="Pfam" id="PF01361">
    <property type="entry name" value="Tautomerase"/>
    <property type="match status" value="1"/>
</dbReference>
<dbReference type="SUPFAM" id="SSF55331">
    <property type="entry name" value="Tautomerase/MIF"/>
    <property type="match status" value="1"/>
</dbReference>
<gene>
    <name type="primary">xylH</name>
</gene>